<feature type="chain" id="PRO_0000373120" description="Termination factor NPH-I homolog">
    <location>
        <begin position="1"/>
        <end position="706"/>
    </location>
</feature>
<feature type="domain" description="Helicase ATP-binding">
    <location>
        <begin position="62"/>
        <end position="227"/>
    </location>
</feature>
<feature type="domain" description="Helicase C-terminal">
    <location>
        <begin position="417"/>
        <end position="599"/>
    </location>
</feature>
<feature type="short sequence motif" description="DEAH box">
    <location>
        <begin position="168"/>
        <end position="171"/>
    </location>
</feature>
<feature type="binding site" evidence="1">
    <location>
        <begin position="75"/>
        <end position="82"/>
    </location>
    <ligand>
        <name>ATP</name>
        <dbReference type="ChEBI" id="CHEBI:30616"/>
    </ligand>
</feature>
<evidence type="ECO:0000250" key="1"/>
<evidence type="ECO:0000250" key="2">
    <source>
        <dbReference type="UniProtKB" id="P05807"/>
    </source>
</evidence>
<evidence type="ECO:0000250" key="3">
    <source>
        <dbReference type="UniProtKB" id="Q89581"/>
    </source>
</evidence>
<evidence type="ECO:0000305" key="4"/>
<sequence>MSCVHNNTSFPVQTEAYLKEVFEKYKELQESKDTSLTARFARALKYYQFLIYTAFSDPKFGIGQGENTRGLLIYHQMGMGKTILSLSLAISLSHIYNPILIAPKSLHSNFQQSLLKLIKLLYPETTDHSKELQKISRRFRFVSLDAYNMGQQIIKAGGSLNGCLLIVDEAHNLFRGIINSANDKTNARQLYNNIMQAKNIRILFLTGTPCSKDPFEMVPCFNMLSGRILLPLHYERFYTAYVNKTTNSPLNADKLLNRLVGMISYAGNQNELNKLFPTELPLIIEKVEMSPEQYRQYLLARDVENAEKHASSGMYEKINAAALCLPGSEQESGSSYYVRSRMISIFASEMLTVKEDEKLSEAVQQLPKEAFTENSSPKIVCMLKNIKTSPGPVLIYSQFVELGLHVVARFLEIEGYQCLQPLKVLEEGHNTILLHKDGKDLMVKNFAEDGPTRTLVLSSKITRFTLITGKILSKERDMIQQLWNSPLNIHGEVIKILLVSKTGAEGLDLKYGRQVHILEPYWDKAREDQVKARIIRIGSHDALPPEEKTVQPFLYIAVANQKMFYSIPEGSQEQKTIDERFHERGLEKSHLNSAFRDLLKRAAIECAFNGESGCLMCQPTNALLFHENFERDLRLPNPCQPLVKAEVKAYSISYEGKQFFYQKNKDVGLGYTFYEYNPIIKAYIEIKPSNPLYIKLIKHVQAGTTA</sequence>
<reference key="1">
    <citation type="submission" date="2003-03" db="EMBL/GenBank/DDBJ databases">
        <title>African swine fever virus genomes.</title>
        <authorList>
            <person name="Kutish G.F."/>
            <person name="Rock D.L."/>
        </authorList>
    </citation>
    <scope>NUCLEOTIDE SEQUENCE [LARGE SCALE GENOMIC DNA]</scope>
</reference>
<gene>
    <name type="ordered locus">War-132</name>
</gene>
<accession>P0C9B2</accession>
<protein>
    <recommendedName>
        <fullName evidence="3">Termination factor NPH-I homolog</fullName>
        <ecNumber evidence="3">3.6.4.-</ecNumber>
    </recommendedName>
</protein>
<comment type="function">
    <text evidence="2">Putative DNA-dependent ATPase required for providing the needed energy to achieve the termination of early transcripts.</text>
</comment>
<comment type="subunit">
    <text evidence="3">Part of the viral DNA-directed RNA polymerase that consists of 8 polII-like subunits (RPB1, RPB2, RPB3, RPB5, RPB6, RPB7, RPB9, RPB10), a capping enzyme and a termination factor.</text>
</comment>
<comment type="subcellular location">
    <subcellularLocation>
        <location evidence="3">Virion</location>
    </subcellularLocation>
    <text evidence="3">Found in association with viral nucleoid.</text>
</comment>
<comment type="induction">
    <text evidence="4">Expressed in the late phase of the viral replicative cycle.</text>
</comment>
<comment type="similarity">
    <text evidence="4">Belongs to the DEAD box helicase family. DEAH subfamily.</text>
</comment>
<organism>
    <name type="scientific">African swine fever virus (isolate Warthog/Namibia/Wart80/1980)</name>
    <name type="common">ASFV</name>
    <dbReference type="NCBI Taxonomy" id="561444"/>
    <lineage>
        <taxon>Viruses</taxon>
        <taxon>Varidnaviria</taxon>
        <taxon>Bamfordvirae</taxon>
        <taxon>Nucleocytoviricota</taxon>
        <taxon>Pokkesviricetes</taxon>
        <taxon>Asfuvirales</taxon>
        <taxon>Asfarviridae</taxon>
        <taxon>Asfivirus</taxon>
        <taxon>African swine fever virus</taxon>
    </lineage>
</organism>
<organismHost>
    <name type="scientific">Ornithodoros</name>
    <name type="common">relapsing fever ticks</name>
    <dbReference type="NCBI Taxonomy" id="6937"/>
</organismHost>
<organismHost>
    <name type="scientific">Phacochoerus aethiopicus</name>
    <name type="common">Warthog</name>
    <dbReference type="NCBI Taxonomy" id="85517"/>
</organismHost>
<organismHost>
    <name type="scientific">Phacochoerus africanus</name>
    <name type="common">Warthog</name>
    <dbReference type="NCBI Taxonomy" id="41426"/>
</organismHost>
<organismHost>
    <name type="scientific">Potamochoerus larvatus</name>
    <name type="common">Bushpig</name>
    <dbReference type="NCBI Taxonomy" id="273792"/>
</organismHost>
<organismHost>
    <name type="scientific">Sus scrofa</name>
    <name type="common">Pig</name>
    <dbReference type="NCBI Taxonomy" id="9823"/>
</organismHost>
<keyword id="KW-0067">ATP-binding</keyword>
<keyword id="KW-0347">Helicase</keyword>
<keyword id="KW-0378">Hydrolase</keyword>
<keyword id="KW-0426">Late protein</keyword>
<keyword id="KW-0547">Nucleotide-binding</keyword>
<keyword id="KW-0946">Virion</keyword>
<name>VF706_ASFWA</name>
<dbReference type="EC" id="3.6.4.-" evidence="3"/>
<dbReference type="EMBL" id="AY261366">
    <property type="status" value="NOT_ANNOTATED_CDS"/>
    <property type="molecule type" value="Genomic_DNA"/>
</dbReference>
<dbReference type="Proteomes" id="UP000000858">
    <property type="component" value="Segment"/>
</dbReference>
<dbReference type="GO" id="GO:0044423">
    <property type="term" value="C:virion component"/>
    <property type="evidence" value="ECO:0007669"/>
    <property type="project" value="UniProtKB-KW"/>
</dbReference>
<dbReference type="GO" id="GO:0005524">
    <property type="term" value="F:ATP binding"/>
    <property type="evidence" value="ECO:0007669"/>
    <property type="project" value="UniProtKB-KW"/>
</dbReference>
<dbReference type="GO" id="GO:0016787">
    <property type="term" value="F:hydrolase activity"/>
    <property type="evidence" value="ECO:0007669"/>
    <property type="project" value="UniProtKB-KW"/>
</dbReference>
<dbReference type="GO" id="GO:0003724">
    <property type="term" value="F:RNA helicase activity"/>
    <property type="evidence" value="ECO:0007669"/>
    <property type="project" value="UniProtKB-EC"/>
</dbReference>
<dbReference type="GO" id="GO:0006281">
    <property type="term" value="P:DNA repair"/>
    <property type="evidence" value="ECO:0007669"/>
    <property type="project" value="TreeGrafter"/>
</dbReference>
<dbReference type="GO" id="GO:0031297">
    <property type="term" value="P:replication fork processing"/>
    <property type="evidence" value="ECO:0007669"/>
    <property type="project" value="TreeGrafter"/>
</dbReference>
<dbReference type="Gene3D" id="3.40.50.300">
    <property type="entry name" value="P-loop containing nucleotide triphosphate hydrolases"/>
    <property type="match status" value="1"/>
</dbReference>
<dbReference type="Gene3D" id="3.40.50.10810">
    <property type="entry name" value="Tandem AAA-ATPase domain"/>
    <property type="match status" value="1"/>
</dbReference>
<dbReference type="InterPro" id="IPR014001">
    <property type="entry name" value="Helicase_ATP-bd"/>
</dbReference>
<dbReference type="InterPro" id="IPR001650">
    <property type="entry name" value="Helicase_C-like"/>
</dbReference>
<dbReference type="InterPro" id="IPR027417">
    <property type="entry name" value="P-loop_NTPase"/>
</dbReference>
<dbReference type="InterPro" id="IPR038718">
    <property type="entry name" value="SNF2-like_sf"/>
</dbReference>
<dbReference type="InterPro" id="IPR000330">
    <property type="entry name" value="SNF2_N"/>
</dbReference>
<dbReference type="PANTHER" id="PTHR45766">
    <property type="entry name" value="DNA ANNEALING HELICASE AND ENDONUCLEASE ZRANB3 FAMILY MEMBER"/>
    <property type="match status" value="1"/>
</dbReference>
<dbReference type="PANTHER" id="PTHR45766:SF6">
    <property type="entry name" value="SWI_SNF-RELATED MATRIX-ASSOCIATED ACTIN-DEPENDENT REGULATOR OF CHROMATIN SUBFAMILY A-LIKE PROTEIN 1"/>
    <property type="match status" value="1"/>
</dbReference>
<dbReference type="Pfam" id="PF00271">
    <property type="entry name" value="Helicase_C"/>
    <property type="match status" value="1"/>
</dbReference>
<dbReference type="Pfam" id="PF00176">
    <property type="entry name" value="SNF2-rel_dom"/>
    <property type="match status" value="1"/>
</dbReference>
<dbReference type="SMART" id="SM00487">
    <property type="entry name" value="DEXDc"/>
    <property type="match status" value="1"/>
</dbReference>
<dbReference type="SMART" id="SM00490">
    <property type="entry name" value="HELICc"/>
    <property type="match status" value="1"/>
</dbReference>
<dbReference type="SUPFAM" id="SSF52540">
    <property type="entry name" value="P-loop containing nucleoside triphosphate hydrolases"/>
    <property type="match status" value="2"/>
</dbReference>
<proteinExistence type="inferred from homology"/>